<dbReference type="EMBL" id="X64896">
    <property type="protein sequence ID" value="CAA46105.1"/>
    <property type="molecule type" value="Genomic_DNA"/>
</dbReference>
<dbReference type="EMBL" id="X74354">
    <property type="protein sequence ID" value="CAA52396.1"/>
    <property type="molecule type" value="Genomic_DNA"/>
</dbReference>
<dbReference type="EMBL" id="X74356">
    <property type="protein sequence ID" value="CAA52398.1"/>
    <property type="molecule type" value="Genomic_DNA"/>
</dbReference>
<dbReference type="PIR" id="S31077">
    <property type="entry name" value="S31077"/>
</dbReference>
<dbReference type="PIR" id="T09605">
    <property type="entry name" value="T09605"/>
</dbReference>
<dbReference type="GO" id="GO:0005576">
    <property type="term" value="C:extracellular region"/>
    <property type="evidence" value="ECO:0007669"/>
    <property type="project" value="UniProtKB-KW"/>
</dbReference>
<dbReference type="GO" id="GO:0071555">
    <property type="term" value="P:cell wall organization"/>
    <property type="evidence" value="ECO:0007669"/>
    <property type="project" value="UniProtKB-KW"/>
</dbReference>
<dbReference type="GO" id="GO:0009877">
    <property type="term" value="P:nodulation"/>
    <property type="evidence" value="ECO:0007669"/>
    <property type="project" value="UniProtKB-KW"/>
</dbReference>
<dbReference type="InterPro" id="IPR051308">
    <property type="entry name" value="Proline-rich_CW_protein"/>
</dbReference>
<dbReference type="PANTHER" id="PTHR34629">
    <property type="entry name" value="PROLINE-RICH EXTENSIN-LIKE PROTEIN EPR1"/>
    <property type="match status" value="1"/>
</dbReference>
<dbReference type="PANTHER" id="PTHR34629:SF4">
    <property type="entry name" value="REPETITIVE PROLINE-RICH CELL WALL PROTEIN 3"/>
    <property type="match status" value="1"/>
</dbReference>
<comment type="function">
    <text evidence="1">Involved in the infection process during the plant-rhizobium interaction.</text>
</comment>
<comment type="subcellular location">
    <subcellularLocation>
        <location evidence="1">Secreted</location>
        <location evidence="1">Cell wall</location>
    </subcellularLocation>
</comment>
<comment type="tissue specificity">
    <text>More abundant in the young nodules than the mature nodules.</text>
</comment>
<comment type="similarity">
    <text evidence="4">Belongs to the plant proline-rich protein superfamily. ENOD12 family.</text>
</comment>
<sequence>MASFLLSILVFFLSALVLVPQGFAEYYLNPAYRPPQTEPPVHKPPHKEPPVHKPPHKDPPVNKPPQKEPPVHKPPRKEPPTHRHPPSEDNIHF</sequence>
<organism>
    <name type="scientific">Medicago sativa</name>
    <name type="common">Alfalfa</name>
    <dbReference type="NCBI Taxonomy" id="3879"/>
    <lineage>
        <taxon>Eukaryota</taxon>
        <taxon>Viridiplantae</taxon>
        <taxon>Streptophyta</taxon>
        <taxon>Embryophyta</taxon>
        <taxon>Tracheophyta</taxon>
        <taxon>Spermatophyta</taxon>
        <taxon>Magnoliopsida</taxon>
        <taxon>eudicotyledons</taxon>
        <taxon>Gunneridae</taxon>
        <taxon>Pentapetalae</taxon>
        <taxon>rosids</taxon>
        <taxon>fabids</taxon>
        <taxon>Fabales</taxon>
        <taxon>Fabaceae</taxon>
        <taxon>Papilionoideae</taxon>
        <taxon>50 kb inversion clade</taxon>
        <taxon>NPAAA clade</taxon>
        <taxon>Hologalegina</taxon>
        <taxon>IRL clade</taxon>
        <taxon>Trifolieae</taxon>
        <taxon>Medicago</taxon>
    </lineage>
</organism>
<proteinExistence type="evidence at transcript level"/>
<evidence type="ECO:0000250" key="1"/>
<evidence type="ECO:0000255" key="2"/>
<evidence type="ECO:0000256" key="3">
    <source>
        <dbReference type="SAM" id="MobiDB-lite"/>
    </source>
</evidence>
<evidence type="ECO:0000305" key="4"/>
<reference key="1">
    <citation type="journal article" date="1993" name="Plant Mol. Biol.">
        <title>Identification of two alfalfa early nodulin genes with homology to members of the pea Enod12 gene family.</title>
        <authorList>
            <person name="Allison L.A."/>
            <person name="Kiss G.B."/>
            <person name="Bauer P."/>
            <person name="Poiret M."/>
            <person name="Pierre M."/>
            <person name="Savoure A."/>
            <person name="Kondorosi E."/>
            <person name="Kondorosi A."/>
        </authorList>
    </citation>
    <scope>NUCLEOTIDE SEQUENCE [GENOMIC DNA]</scope>
    <source>
        <strain>cv. Nagyszenasi</strain>
    </source>
</reference>
<reference key="2">
    <citation type="journal article" date="1994" name="Plant Cell">
        <title>ENOD12, an early nodulin gene, is not required for nodule formation and efficient nitrogen fixation in alfalfa.</title>
        <authorList>
            <person name="Csanadi G."/>
            <person name="Szecsi J."/>
            <person name="Kalo P."/>
            <person name="Kiss P."/>
            <person name="Endre G."/>
            <person name="Kondorosi A."/>
            <person name="Kondorosi E."/>
            <person name="Kiss G.B."/>
        </authorList>
    </citation>
    <scope>NUCLEOTIDE SEQUENCE [GENOMIC DNA] OF 15-93</scope>
    <source>
        <strain>cv. Coerula W2</strain>
        <strain>cv. Quasifalcata K93</strain>
    </source>
</reference>
<accession>Q40361</accession>
<accession>Q40340</accession>
<accession>Q40341</accession>
<feature type="signal peptide" evidence="2">
    <location>
        <begin position="1"/>
        <end position="24"/>
    </location>
</feature>
<feature type="chain" id="PRO_0000019801" description="Early nodulin-12A">
    <location>
        <begin position="25"/>
        <end position="93"/>
    </location>
</feature>
<feature type="repeat" description="1">
    <location>
        <begin position="34"/>
        <end position="38"/>
    </location>
</feature>
<feature type="repeat" description="2">
    <location>
        <begin position="39"/>
        <end position="43"/>
    </location>
</feature>
<feature type="repeat" description="3">
    <location>
        <begin position="44"/>
        <end position="48"/>
    </location>
</feature>
<feature type="repeat" description="4">
    <location>
        <begin position="49"/>
        <end position="53"/>
    </location>
</feature>
<feature type="repeat" description="5">
    <location>
        <begin position="54"/>
        <end position="58"/>
    </location>
</feature>
<feature type="repeat" description="6">
    <location>
        <begin position="59"/>
        <end position="63"/>
    </location>
</feature>
<feature type="repeat" description="7">
    <location>
        <begin position="64"/>
        <end position="68"/>
    </location>
</feature>
<feature type="repeat" description="8">
    <location>
        <begin position="69"/>
        <end position="73"/>
    </location>
</feature>
<feature type="repeat" description="9">
    <location>
        <begin position="74"/>
        <end position="78"/>
    </location>
</feature>
<feature type="repeat" description="10">
    <location>
        <begin position="79"/>
        <end position="83"/>
    </location>
</feature>
<feature type="region of interest" description="Disordered" evidence="3">
    <location>
        <begin position="30"/>
        <end position="93"/>
    </location>
</feature>
<feature type="region of interest" description="10 X 5 AA tandem repeats of P-P-[HQVRT]-[HKNT]-[DEKR]">
    <location>
        <begin position="34"/>
        <end position="83"/>
    </location>
</feature>
<feature type="compositionally biased region" description="Basic and acidic residues" evidence="3">
    <location>
        <begin position="46"/>
        <end position="93"/>
    </location>
</feature>
<feature type="sequence variant" description="In strain: cv. Quasifalcata K93.">
    <original>T</original>
    <variation>TKPPVNKPPHK</variation>
    <location>
        <position position="37"/>
    </location>
</feature>
<feature type="sequence variant" description="In strain: cv. Quasifalcata K93.">
    <original>E</original>
    <variation>K</variation>
    <location>
        <position position="68"/>
    </location>
</feature>
<keyword id="KW-0134">Cell wall</keyword>
<keyword id="KW-0961">Cell wall biogenesis/degradation</keyword>
<keyword id="KW-0536">Nodulation</keyword>
<keyword id="KW-0677">Repeat</keyword>
<keyword id="KW-0964">Secreted</keyword>
<keyword id="KW-0732">Signal</keyword>
<gene>
    <name type="primary">ENOD12A</name>
    <name type="synonym">ENOD12</name>
    <name type="synonym">NMS-8</name>
</gene>
<name>NO12A_MEDSA</name>
<protein>
    <recommendedName>
        <fullName>Early nodulin-12A</fullName>
        <shortName>N-12A</shortName>
    </recommendedName>
    <alternativeName>
        <fullName>Early nodulin-NMS-8</fullName>
    </alternativeName>
</protein>